<feature type="chain" id="PRO_0000342641" description="Phosphatase NudJ">
    <location>
        <begin position="1"/>
        <end position="153"/>
    </location>
</feature>
<feature type="domain" description="Nudix hydrolase" evidence="2">
    <location>
        <begin position="3"/>
        <end position="131"/>
    </location>
</feature>
<feature type="short sequence motif" description="Nudix box">
    <location>
        <begin position="36"/>
        <end position="57"/>
    </location>
</feature>
<comment type="cofactor">
    <cofactor evidence="1">
        <name>Mg(2+)</name>
        <dbReference type="ChEBI" id="CHEBI:18420"/>
    </cofactor>
</comment>
<comment type="subunit">
    <text evidence="1">Monomer.</text>
</comment>
<comment type="similarity">
    <text evidence="3">Belongs to the Nudix hydrolase family. NudJ subfamily.</text>
</comment>
<dbReference type="EC" id="3.6.1.-"/>
<dbReference type="EMBL" id="CP000800">
    <property type="protein sequence ID" value="ABV17941.1"/>
    <property type="molecule type" value="Genomic_DNA"/>
</dbReference>
<dbReference type="RefSeq" id="WP_000476093.1">
    <property type="nucleotide sequence ID" value="NC_009801.1"/>
</dbReference>
<dbReference type="SMR" id="A7ZKS4"/>
<dbReference type="GeneID" id="75203720"/>
<dbReference type="KEGG" id="ecw:EcE24377A_1297"/>
<dbReference type="HOGENOM" id="CLU_037162_6_1_6"/>
<dbReference type="Proteomes" id="UP000001122">
    <property type="component" value="Chromosome"/>
</dbReference>
<dbReference type="GO" id="GO:0017110">
    <property type="term" value="F:nucleoside diphosphate phosphatase activity"/>
    <property type="evidence" value="ECO:0007669"/>
    <property type="project" value="InterPro"/>
</dbReference>
<dbReference type="GO" id="GO:0017111">
    <property type="term" value="F:ribonucleoside triphosphate phosphatase activity"/>
    <property type="evidence" value="ECO:0007669"/>
    <property type="project" value="InterPro"/>
</dbReference>
<dbReference type="GO" id="GO:0004787">
    <property type="term" value="F:thiamine diphosphate phosphatase activity"/>
    <property type="evidence" value="ECO:0007669"/>
    <property type="project" value="InterPro"/>
</dbReference>
<dbReference type="CDD" id="cd03675">
    <property type="entry name" value="NUDIX_Hydrolase"/>
    <property type="match status" value="1"/>
</dbReference>
<dbReference type="FunFam" id="3.90.79.10:FF:000017">
    <property type="entry name" value="Phosphatase NudJ"/>
    <property type="match status" value="1"/>
</dbReference>
<dbReference type="Gene3D" id="3.90.79.10">
    <property type="entry name" value="Nucleoside Triphosphate Pyrophosphohydrolase"/>
    <property type="match status" value="1"/>
</dbReference>
<dbReference type="InterPro" id="IPR020476">
    <property type="entry name" value="Nudix_hydrolase"/>
</dbReference>
<dbReference type="InterPro" id="IPR015797">
    <property type="entry name" value="NUDIX_hydrolase-like_dom_sf"/>
</dbReference>
<dbReference type="InterPro" id="IPR020084">
    <property type="entry name" value="NUDIX_hydrolase_CS"/>
</dbReference>
<dbReference type="InterPro" id="IPR000086">
    <property type="entry name" value="NUDIX_hydrolase_dom"/>
</dbReference>
<dbReference type="InterPro" id="IPR033713">
    <property type="entry name" value="NudJ"/>
</dbReference>
<dbReference type="PANTHER" id="PTHR43222">
    <property type="entry name" value="NUDIX HYDROLASE 23"/>
    <property type="match status" value="1"/>
</dbReference>
<dbReference type="PANTHER" id="PTHR43222:SF11">
    <property type="entry name" value="PHOSPHATASE NUDJ"/>
    <property type="match status" value="1"/>
</dbReference>
<dbReference type="Pfam" id="PF00293">
    <property type="entry name" value="NUDIX"/>
    <property type="match status" value="1"/>
</dbReference>
<dbReference type="PRINTS" id="PR00502">
    <property type="entry name" value="NUDIXFAMILY"/>
</dbReference>
<dbReference type="SUPFAM" id="SSF55811">
    <property type="entry name" value="Nudix"/>
    <property type="match status" value="1"/>
</dbReference>
<dbReference type="PROSITE" id="PS51462">
    <property type="entry name" value="NUDIX"/>
    <property type="match status" value="1"/>
</dbReference>
<dbReference type="PROSITE" id="PS00893">
    <property type="entry name" value="NUDIX_BOX"/>
    <property type="match status" value="1"/>
</dbReference>
<reference key="1">
    <citation type="journal article" date="2008" name="J. Bacteriol.">
        <title>The pangenome structure of Escherichia coli: comparative genomic analysis of E. coli commensal and pathogenic isolates.</title>
        <authorList>
            <person name="Rasko D.A."/>
            <person name="Rosovitz M.J."/>
            <person name="Myers G.S.A."/>
            <person name="Mongodin E.F."/>
            <person name="Fricke W.F."/>
            <person name="Gajer P."/>
            <person name="Crabtree J."/>
            <person name="Sebaihia M."/>
            <person name="Thomson N.R."/>
            <person name="Chaudhuri R."/>
            <person name="Henderson I.R."/>
            <person name="Sperandio V."/>
            <person name="Ravel J."/>
        </authorList>
    </citation>
    <scope>NUCLEOTIDE SEQUENCE [LARGE SCALE GENOMIC DNA]</scope>
    <source>
        <strain>E24377A / ETEC</strain>
    </source>
</reference>
<gene>
    <name type="primary">nudJ</name>
    <name type="ordered locus">EcE24377A_1297</name>
</gene>
<sequence>MFKPHVTVACVVHAEGKFLVVEETINGKALWNQPAGHLEADETLVEAAARELWEETGISAQPQHFIRMHQWIAPDKTPFLRFLFAIELEQICPTQPHDSDIDCCRWVSAEEILQASNLRSPLVAESIRCYQSGQRYPLEMIGDFNWPFTKGVI</sequence>
<protein>
    <recommendedName>
        <fullName>Phosphatase NudJ</fullName>
        <ecNumber>3.6.1.-</ecNumber>
    </recommendedName>
</protein>
<evidence type="ECO:0000250" key="1"/>
<evidence type="ECO:0000255" key="2">
    <source>
        <dbReference type="PROSITE-ProRule" id="PRU00794"/>
    </source>
</evidence>
<evidence type="ECO:0000305" key="3"/>
<name>NUDJ_ECO24</name>
<keyword id="KW-0378">Hydrolase</keyword>
<keyword id="KW-0460">Magnesium</keyword>
<keyword id="KW-1185">Reference proteome</keyword>
<accession>A7ZKS4</accession>
<proteinExistence type="inferred from homology"/>
<organism>
    <name type="scientific">Escherichia coli O139:H28 (strain E24377A / ETEC)</name>
    <dbReference type="NCBI Taxonomy" id="331111"/>
    <lineage>
        <taxon>Bacteria</taxon>
        <taxon>Pseudomonadati</taxon>
        <taxon>Pseudomonadota</taxon>
        <taxon>Gammaproteobacteria</taxon>
        <taxon>Enterobacterales</taxon>
        <taxon>Enterobacteriaceae</taxon>
        <taxon>Escherichia</taxon>
    </lineage>
</organism>